<gene>
    <name evidence="1" type="primary">rpoC1</name>
</gene>
<geneLocation type="chloroplast"/>
<proteinExistence type="inferred from homology"/>
<organism>
    <name type="scientific">Cyanidium caldarium</name>
    <name type="common">Red alga</name>
    <dbReference type="NCBI Taxonomy" id="2771"/>
    <lineage>
        <taxon>Eukaryota</taxon>
        <taxon>Rhodophyta</taxon>
        <taxon>Bangiophyceae</taxon>
        <taxon>Cyanidiales</taxon>
        <taxon>Cyanidiaceae</taxon>
        <taxon>Cyanidium</taxon>
    </lineage>
</organism>
<accession>O19897</accession>
<sequence>MVSHQFLPYLDYIKICLASPERIRVWAQRILPNGQIVGEVTKPETINYRTLKPEMDGLFCERIFGPIKNWECHCGKYKRIKDKGIICERCGVEVTESKVRRHRMGYIELSAPVVHIWYLKGMPSYISVFLDMAAKEIEQVVYFNTYIITHSTAENKQIKYKQLLTEDEWVLIEDQIYRNEIQGEIEIGIGASAILKMLKDLDLSLESDLLRTKLVNLKAVKKDKIMKRLRIIDNFMVTGASPSWMVLNVIPVISPDLRPMVQLDGGRFATSDLNDLYRRVINRNNRLKRLEEILAPEIIIRNEKRMLQEAVDALIDNGRRGRVVVGANNRALKSLSNIIEGKQGRFRQNLLGKRVDYSGRSVIVVGPDLKLNECGIPKEMAIELFQPFLIHQIIKEGLANNMKSAKKLMQKHTSVTIELLQKIIKWHPVLLNRAPTLHRLGIQAFDPVLVDGRAIRLHPLVCPAFNADFDGDQMAVHIPLSIEAQTEARLLMLAPNNFLSPATGQPIITPSQDMVLGCYYLTNNNLANQKGSGHYFSSFEDAIIAYKQKLISLHAFIWVKFYGTINNLDIGRFIKSTLCKNKLTTTDYYENLQVKKDIEGTITCQFIKTSVGRIFFNIAISGNLFFSTSNHNK</sequence>
<keyword id="KW-0150">Chloroplast</keyword>
<keyword id="KW-0240">DNA-directed RNA polymerase</keyword>
<keyword id="KW-0460">Magnesium</keyword>
<keyword id="KW-0479">Metal-binding</keyword>
<keyword id="KW-0548">Nucleotidyltransferase</keyword>
<keyword id="KW-0934">Plastid</keyword>
<keyword id="KW-0804">Transcription</keyword>
<keyword id="KW-0808">Transferase</keyword>
<keyword id="KW-0862">Zinc</keyword>
<protein>
    <recommendedName>
        <fullName evidence="1">DNA-directed RNA polymerase subunit beta'</fullName>
        <ecNumber evidence="1">2.7.7.6</ecNumber>
    </recommendedName>
    <alternativeName>
        <fullName evidence="1">PEP</fullName>
    </alternativeName>
    <alternativeName>
        <fullName evidence="1">Plastid-encoded RNA polymerase subunit beta'</fullName>
        <shortName evidence="1">RNA polymerase subunit beta'</shortName>
    </alternativeName>
</protein>
<name>RPOC1_CYACA</name>
<comment type="function">
    <text evidence="1">DNA-dependent RNA polymerase catalyzes the transcription of DNA into RNA using the four ribonucleoside triphosphates as substrates.</text>
</comment>
<comment type="catalytic activity">
    <reaction evidence="1">
        <text>RNA(n) + a ribonucleoside 5'-triphosphate = RNA(n+1) + diphosphate</text>
        <dbReference type="Rhea" id="RHEA:21248"/>
        <dbReference type="Rhea" id="RHEA-COMP:14527"/>
        <dbReference type="Rhea" id="RHEA-COMP:17342"/>
        <dbReference type="ChEBI" id="CHEBI:33019"/>
        <dbReference type="ChEBI" id="CHEBI:61557"/>
        <dbReference type="ChEBI" id="CHEBI:140395"/>
        <dbReference type="EC" id="2.7.7.6"/>
    </reaction>
</comment>
<comment type="cofactor">
    <cofactor evidence="1">
        <name>Mg(2+)</name>
        <dbReference type="ChEBI" id="CHEBI:18420"/>
    </cofactor>
    <text evidence="1">Binds 1 Mg(2+) ion per subunit.</text>
</comment>
<comment type="cofactor">
    <cofactor evidence="1">
        <name>Zn(2+)</name>
        <dbReference type="ChEBI" id="CHEBI:29105"/>
    </cofactor>
    <text evidence="1">Binds 1 Zn(2+) ion per subunit.</text>
</comment>
<comment type="subunit">
    <text evidence="1">In plastids the minimal PEP RNA polymerase catalytic core is composed of four subunits: alpha, beta, beta', and beta''. When a (nuclear-encoded) sigma factor is associated with the core the holoenzyme is formed, which can initiate transcription.</text>
</comment>
<comment type="subcellular location">
    <subcellularLocation>
        <location evidence="1">Plastid</location>
        <location evidence="1">Chloroplast</location>
    </subcellularLocation>
</comment>
<comment type="similarity">
    <text evidence="1">Belongs to the RNA polymerase beta' chain family. RpoC1 subfamily.</text>
</comment>
<dbReference type="EC" id="2.7.7.6" evidence="1"/>
<dbReference type="EMBL" id="AF022186">
    <property type="protein sequence ID" value="AAB82692.2"/>
    <property type="molecule type" value="Genomic_DNA"/>
</dbReference>
<dbReference type="RefSeq" id="NP_045032.1">
    <property type="nucleotide sequence ID" value="NC_001840.1"/>
</dbReference>
<dbReference type="SMR" id="O19897"/>
<dbReference type="GeneID" id="800291"/>
<dbReference type="GO" id="GO:0009507">
    <property type="term" value="C:chloroplast"/>
    <property type="evidence" value="ECO:0007669"/>
    <property type="project" value="UniProtKB-SubCell"/>
</dbReference>
<dbReference type="GO" id="GO:0000428">
    <property type="term" value="C:DNA-directed RNA polymerase complex"/>
    <property type="evidence" value="ECO:0007669"/>
    <property type="project" value="UniProtKB-KW"/>
</dbReference>
<dbReference type="GO" id="GO:0005739">
    <property type="term" value="C:mitochondrion"/>
    <property type="evidence" value="ECO:0007669"/>
    <property type="project" value="GOC"/>
</dbReference>
<dbReference type="GO" id="GO:0003677">
    <property type="term" value="F:DNA binding"/>
    <property type="evidence" value="ECO:0007669"/>
    <property type="project" value="UniProtKB-UniRule"/>
</dbReference>
<dbReference type="GO" id="GO:0003899">
    <property type="term" value="F:DNA-directed RNA polymerase activity"/>
    <property type="evidence" value="ECO:0007669"/>
    <property type="project" value="UniProtKB-UniRule"/>
</dbReference>
<dbReference type="GO" id="GO:0000287">
    <property type="term" value="F:magnesium ion binding"/>
    <property type="evidence" value="ECO:0007669"/>
    <property type="project" value="UniProtKB-UniRule"/>
</dbReference>
<dbReference type="GO" id="GO:0008270">
    <property type="term" value="F:zinc ion binding"/>
    <property type="evidence" value="ECO:0007669"/>
    <property type="project" value="UniProtKB-UniRule"/>
</dbReference>
<dbReference type="GO" id="GO:0006351">
    <property type="term" value="P:DNA-templated transcription"/>
    <property type="evidence" value="ECO:0007669"/>
    <property type="project" value="UniProtKB-UniRule"/>
</dbReference>
<dbReference type="Gene3D" id="1.10.40.90">
    <property type="match status" value="1"/>
</dbReference>
<dbReference type="Gene3D" id="2.40.40.20">
    <property type="match status" value="1"/>
</dbReference>
<dbReference type="Gene3D" id="4.10.860.120">
    <property type="entry name" value="RNA polymerase II, clamp domain"/>
    <property type="match status" value="1"/>
</dbReference>
<dbReference type="Gene3D" id="1.10.274.100">
    <property type="entry name" value="RNA polymerase Rpb1, domain 3"/>
    <property type="match status" value="1"/>
</dbReference>
<dbReference type="HAMAP" id="MF_01323">
    <property type="entry name" value="RNApol_bact_RpoC1"/>
    <property type="match status" value="1"/>
</dbReference>
<dbReference type="InterPro" id="IPR012755">
    <property type="entry name" value="DNA-dir_RpoC1_gamma"/>
</dbReference>
<dbReference type="InterPro" id="IPR045867">
    <property type="entry name" value="DNA-dir_RpoC_beta_prime"/>
</dbReference>
<dbReference type="InterPro" id="IPR000722">
    <property type="entry name" value="RNA_pol_asu"/>
</dbReference>
<dbReference type="InterPro" id="IPR006592">
    <property type="entry name" value="RNA_pol_N"/>
</dbReference>
<dbReference type="InterPro" id="IPR007080">
    <property type="entry name" value="RNA_pol_Rpb1_1"/>
</dbReference>
<dbReference type="InterPro" id="IPR007066">
    <property type="entry name" value="RNA_pol_Rpb1_3"/>
</dbReference>
<dbReference type="InterPro" id="IPR042102">
    <property type="entry name" value="RNA_pol_Rpb1_3_sf"/>
</dbReference>
<dbReference type="InterPro" id="IPR044893">
    <property type="entry name" value="RNA_pol_Rpb1_clamp_domain"/>
</dbReference>
<dbReference type="InterPro" id="IPR034678">
    <property type="entry name" value="RNApol_RpoC1"/>
</dbReference>
<dbReference type="NCBIfam" id="TIGR02387">
    <property type="entry name" value="rpoC1_cyan"/>
    <property type="match status" value="1"/>
</dbReference>
<dbReference type="PANTHER" id="PTHR19376">
    <property type="entry name" value="DNA-DIRECTED RNA POLYMERASE"/>
    <property type="match status" value="1"/>
</dbReference>
<dbReference type="PANTHER" id="PTHR19376:SF54">
    <property type="entry name" value="DNA-DIRECTED RNA POLYMERASE SUBUNIT BETA"/>
    <property type="match status" value="1"/>
</dbReference>
<dbReference type="Pfam" id="PF04997">
    <property type="entry name" value="RNA_pol_Rpb1_1"/>
    <property type="match status" value="1"/>
</dbReference>
<dbReference type="Pfam" id="PF00623">
    <property type="entry name" value="RNA_pol_Rpb1_2"/>
    <property type="match status" value="2"/>
</dbReference>
<dbReference type="Pfam" id="PF04983">
    <property type="entry name" value="RNA_pol_Rpb1_3"/>
    <property type="match status" value="1"/>
</dbReference>
<dbReference type="SMART" id="SM00663">
    <property type="entry name" value="RPOLA_N"/>
    <property type="match status" value="1"/>
</dbReference>
<dbReference type="SUPFAM" id="SSF64484">
    <property type="entry name" value="beta and beta-prime subunits of DNA dependent RNA-polymerase"/>
    <property type="match status" value="1"/>
</dbReference>
<reference key="1">
    <citation type="journal article" date="2000" name="J. Mol. Evol.">
        <title>The structure and gene repertoire of an ancient red algal plastid genome.</title>
        <authorList>
            <person name="Gloeckner G."/>
            <person name="Rosenthal A."/>
            <person name="Valentin K.-U."/>
        </authorList>
    </citation>
    <scope>NUCLEOTIDE SEQUENCE [LARGE SCALE GENOMIC DNA]</scope>
    <source>
        <strain>RK-1</strain>
    </source>
</reference>
<evidence type="ECO:0000255" key="1">
    <source>
        <dbReference type="HAMAP-Rule" id="MF_01323"/>
    </source>
</evidence>
<feature type="chain" id="PRO_0000067869" description="DNA-directed RNA polymerase subunit beta'">
    <location>
        <begin position="1"/>
        <end position="633"/>
    </location>
</feature>
<feature type="binding site" evidence="1">
    <location>
        <position position="72"/>
    </location>
    <ligand>
        <name>Zn(2+)</name>
        <dbReference type="ChEBI" id="CHEBI:29105"/>
    </ligand>
</feature>
<feature type="binding site" evidence="1">
    <location>
        <position position="74"/>
    </location>
    <ligand>
        <name>Zn(2+)</name>
        <dbReference type="ChEBI" id="CHEBI:29105"/>
    </ligand>
</feature>
<feature type="binding site" evidence="1">
    <location>
        <position position="87"/>
    </location>
    <ligand>
        <name>Zn(2+)</name>
        <dbReference type="ChEBI" id="CHEBI:29105"/>
    </ligand>
</feature>
<feature type="binding site" evidence="1">
    <location>
        <position position="90"/>
    </location>
    <ligand>
        <name>Zn(2+)</name>
        <dbReference type="ChEBI" id="CHEBI:29105"/>
    </ligand>
</feature>
<feature type="binding site" evidence="1">
    <location>
        <position position="468"/>
    </location>
    <ligand>
        <name>Mg(2+)</name>
        <dbReference type="ChEBI" id="CHEBI:18420"/>
    </ligand>
</feature>
<feature type="binding site" evidence="1">
    <location>
        <position position="470"/>
    </location>
    <ligand>
        <name>Mg(2+)</name>
        <dbReference type="ChEBI" id="CHEBI:18420"/>
    </ligand>
</feature>
<feature type="binding site" evidence="1">
    <location>
        <position position="472"/>
    </location>
    <ligand>
        <name>Mg(2+)</name>
        <dbReference type="ChEBI" id="CHEBI:18420"/>
    </ligand>
</feature>